<proteinExistence type="inferred from homology"/>
<accession>B3PIS7</accession>
<gene>
    <name evidence="1" type="primary">atpD</name>
    <name type="ordered locus">CJA_3809</name>
</gene>
<sequence length="459" mass="49803">MSSGRIVQIIGAVIDVEFPRDAVPKVYDALVISEGNLTLEVQQQLGDGVVRTIALGSSEGLRRGLSVTNTNEPIKVPVGTQTLGRIMDVLGNPIDEAGPIGEQERMQIHRAAPAYEELAASEELLETGIKVIDLVCPFAKGGKVGLFGGAGVGKTVNMMELINNIAKEHSGLSVFAGVGERTREGNDFYHEMKDSNVVDKVAMVYGQMNEPPGNRLRVALTGLTMAEKFRDEGRDVLLFVDNIYRYTLAGTEVSALLGRMPSAVGYQPTLAEEMGVLQERITSTKIGSITSVQAVYVPADDLTDPSPATTFAHLDSTVVLSRDIAAKGIYPAIDPLDSTSRQLDPMVIGNEHYLVARGVQSVLQRYKELKDIIAILGMDELSEEDKLTVNRARKIERFLSQPFHVAEVFTGSPGKYVPLKETIRGFKGLLAGDYDHLPEQAFYMVGGIDEAIEKAGKLK</sequence>
<reference key="1">
    <citation type="journal article" date="2008" name="J. Bacteriol.">
        <title>Insights into plant cell wall degradation from the genome sequence of the soil bacterium Cellvibrio japonicus.</title>
        <authorList>
            <person name="DeBoy R.T."/>
            <person name="Mongodin E.F."/>
            <person name="Fouts D.E."/>
            <person name="Tailford L.E."/>
            <person name="Khouri H."/>
            <person name="Emerson J.B."/>
            <person name="Mohamoud Y."/>
            <person name="Watkins K."/>
            <person name="Henrissat B."/>
            <person name="Gilbert H.J."/>
            <person name="Nelson K.E."/>
        </authorList>
    </citation>
    <scope>NUCLEOTIDE SEQUENCE [LARGE SCALE GENOMIC DNA]</scope>
    <source>
        <strain>Ueda107</strain>
    </source>
</reference>
<keyword id="KW-0066">ATP synthesis</keyword>
<keyword id="KW-0067">ATP-binding</keyword>
<keyword id="KW-0997">Cell inner membrane</keyword>
<keyword id="KW-1003">Cell membrane</keyword>
<keyword id="KW-0139">CF(1)</keyword>
<keyword id="KW-0375">Hydrogen ion transport</keyword>
<keyword id="KW-0406">Ion transport</keyword>
<keyword id="KW-0472">Membrane</keyword>
<keyword id="KW-0547">Nucleotide-binding</keyword>
<keyword id="KW-1185">Reference proteome</keyword>
<keyword id="KW-1278">Translocase</keyword>
<keyword id="KW-0813">Transport</keyword>
<dbReference type="EC" id="7.1.2.2" evidence="1"/>
<dbReference type="EMBL" id="CP000934">
    <property type="protein sequence ID" value="ACE82979.1"/>
    <property type="molecule type" value="Genomic_DNA"/>
</dbReference>
<dbReference type="RefSeq" id="WP_012489372.1">
    <property type="nucleotide sequence ID" value="NC_010995.1"/>
</dbReference>
<dbReference type="SMR" id="B3PIS7"/>
<dbReference type="STRING" id="498211.CJA_3809"/>
<dbReference type="KEGG" id="cja:CJA_3809"/>
<dbReference type="eggNOG" id="COG0055">
    <property type="taxonomic scope" value="Bacteria"/>
</dbReference>
<dbReference type="HOGENOM" id="CLU_022398_0_2_6"/>
<dbReference type="OrthoDB" id="9801639at2"/>
<dbReference type="Proteomes" id="UP000001036">
    <property type="component" value="Chromosome"/>
</dbReference>
<dbReference type="GO" id="GO:0005886">
    <property type="term" value="C:plasma membrane"/>
    <property type="evidence" value="ECO:0007669"/>
    <property type="project" value="UniProtKB-SubCell"/>
</dbReference>
<dbReference type="GO" id="GO:0045259">
    <property type="term" value="C:proton-transporting ATP synthase complex"/>
    <property type="evidence" value="ECO:0007669"/>
    <property type="project" value="UniProtKB-KW"/>
</dbReference>
<dbReference type="GO" id="GO:0005524">
    <property type="term" value="F:ATP binding"/>
    <property type="evidence" value="ECO:0007669"/>
    <property type="project" value="UniProtKB-UniRule"/>
</dbReference>
<dbReference type="GO" id="GO:0016887">
    <property type="term" value="F:ATP hydrolysis activity"/>
    <property type="evidence" value="ECO:0007669"/>
    <property type="project" value="InterPro"/>
</dbReference>
<dbReference type="GO" id="GO:0046933">
    <property type="term" value="F:proton-transporting ATP synthase activity, rotational mechanism"/>
    <property type="evidence" value="ECO:0007669"/>
    <property type="project" value="UniProtKB-UniRule"/>
</dbReference>
<dbReference type="CDD" id="cd18110">
    <property type="entry name" value="ATP-synt_F1_beta_C"/>
    <property type="match status" value="1"/>
</dbReference>
<dbReference type="CDD" id="cd18115">
    <property type="entry name" value="ATP-synt_F1_beta_N"/>
    <property type="match status" value="1"/>
</dbReference>
<dbReference type="CDD" id="cd01133">
    <property type="entry name" value="F1-ATPase_beta_CD"/>
    <property type="match status" value="1"/>
</dbReference>
<dbReference type="FunFam" id="1.10.1140.10:FF:000001">
    <property type="entry name" value="ATP synthase subunit beta"/>
    <property type="match status" value="1"/>
</dbReference>
<dbReference type="FunFam" id="2.40.10.170:FF:000003">
    <property type="entry name" value="ATP synthase subunit beta"/>
    <property type="match status" value="1"/>
</dbReference>
<dbReference type="FunFam" id="3.40.50.300:FF:000004">
    <property type="entry name" value="ATP synthase subunit beta"/>
    <property type="match status" value="1"/>
</dbReference>
<dbReference type="Gene3D" id="2.40.10.170">
    <property type="match status" value="1"/>
</dbReference>
<dbReference type="Gene3D" id="1.10.1140.10">
    <property type="entry name" value="Bovine Mitochondrial F1-atpase, Atp Synthase Beta Chain, Chain D, domain 3"/>
    <property type="match status" value="1"/>
</dbReference>
<dbReference type="Gene3D" id="3.40.50.300">
    <property type="entry name" value="P-loop containing nucleotide triphosphate hydrolases"/>
    <property type="match status" value="1"/>
</dbReference>
<dbReference type="HAMAP" id="MF_01347">
    <property type="entry name" value="ATP_synth_beta_bact"/>
    <property type="match status" value="1"/>
</dbReference>
<dbReference type="InterPro" id="IPR003593">
    <property type="entry name" value="AAA+_ATPase"/>
</dbReference>
<dbReference type="InterPro" id="IPR055190">
    <property type="entry name" value="ATP-synt_VA_C"/>
</dbReference>
<dbReference type="InterPro" id="IPR005722">
    <property type="entry name" value="ATP_synth_F1_bsu"/>
</dbReference>
<dbReference type="InterPro" id="IPR020003">
    <property type="entry name" value="ATPase_a/bsu_AS"/>
</dbReference>
<dbReference type="InterPro" id="IPR050053">
    <property type="entry name" value="ATPase_alpha/beta_chains"/>
</dbReference>
<dbReference type="InterPro" id="IPR004100">
    <property type="entry name" value="ATPase_F1/V1/A1_a/bsu_N"/>
</dbReference>
<dbReference type="InterPro" id="IPR036121">
    <property type="entry name" value="ATPase_F1/V1/A1_a/bsu_N_sf"/>
</dbReference>
<dbReference type="InterPro" id="IPR000194">
    <property type="entry name" value="ATPase_F1/V1/A1_a/bsu_nucl-bd"/>
</dbReference>
<dbReference type="InterPro" id="IPR024034">
    <property type="entry name" value="ATPase_F1/V1_b/a_C"/>
</dbReference>
<dbReference type="InterPro" id="IPR027417">
    <property type="entry name" value="P-loop_NTPase"/>
</dbReference>
<dbReference type="NCBIfam" id="TIGR01039">
    <property type="entry name" value="atpD"/>
    <property type="match status" value="1"/>
</dbReference>
<dbReference type="PANTHER" id="PTHR15184">
    <property type="entry name" value="ATP SYNTHASE"/>
    <property type="match status" value="1"/>
</dbReference>
<dbReference type="PANTHER" id="PTHR15184:SF71">
    <property type="entry name" value="ATP SYNTHASE SUBUNIT BETA, MITOCHONDRIAL"/>
    <property type="match status" value="1"/>
</dbReference>
<dbReference type="Pfam" id="PF00006">
    <property type="entry name" value="ATP-synt_ab"/>
    <property type="match status" value="1"/>
</dbReference>
<dbReference type="Pfam" id="PF02874">
    <property type="entry name" value="ATP-synt_ab_N"/>
    <property type="match status" value="1"/>
</dbReference>
<dbReference type="Pfam" id="PF22919">
    <property type="entry name" value="ATP-synt_VA_C"/>
    <property type="match status" value="1"/>
</dbReference>
<dbReference type="SMART" id="SM00382">
    <property type="entry name" value="AAA"/>
    <property type="match status" value="1"/>
</dbReference>
<dbReference type="SUPFAM" id="SSF47917">
    <property type="entry name" value="C-terminal domain of alpha and beta subunits of F1 ATP synthase"/>
    <property type="match status" value="1"/>
</dbReference>
<dbReference type="SUPFAM" id="SSF50615">
    <property type="entry name" value="N-terminal domain of alpha and beta subunits of F1 ATP synthase"/>
    <property type="match status" value="1"/>
</dbReference>
<dbReference type="SUPFAM" id="SSF52540">
    <property type="entry name" value="P-loop containing nucleoside triphosphate hydrolases"/>
    <property type="match status" value="1"/>
</dbReference>
<dbReference type="PROSITE" id="PS00152">
    <property type="entry name" value="ATPASE_ALPHA_BETA"/>
    <property type="match status" value="1"/>
</dbReference>
<organism>
    <name type="scientific">Cellvibrio japonicus (strain Ueda107)</name>
    <name type="common">Pseudomonas fluorescens subsp. cellulosa</name>
    <dbReference type="NCBI Taxonomy" id="498211"/>
    <lineage>
        <taxon>Bacteria</taxon>
        <taxon>Pseudomonadati</taxon>
        <taxon>Pseudomonadota</taxon>
        <taxon>Gammaproteobacteria</taxon>
        <taxon>Cellvibrionales</taxon>
        <taxon>Cellvibrionaceae</taxon>
        <taxon>Cellvibrio</taxon>
    </lineage>
</organism>
<evidence type="ECO:0000255" key="1">
    <source>
        <dbReference type="HAMAP-Rule" id="MF_01347"/>
    </source>
</evidence>
<name>ATPB_CELJU</name>
<protein>
    <recommendedName>
        <fullName evidence="1">ATP synthase subunit beta</fullName>
        <ecNumber evidence="1">7.1.2.2</ecNumber>
    </recommendedName>
    <alternativeName>
        <fullName evidence="1">ATP synthase F1 sector subunit beta</fullName>
    </alternativeName>
    <alternativeName>
        <fullName evidence="1">F-ATPase subunit beta</fullName>
    </alternativeName>
</protein>
<feature type="chain" id="PRO_1000143483" description="ATP synthase subunit beta">
    <location>
        <begin position="1"/>
        <end position="459"/>
    </location>
</feature>
<feature type="binding site" evidence="1">
    <location>
        <begin position="148"/>
        <end position="155"/>
    </location>
    <ligand>
        <name>ATP</name>
        <dbReference type="ChEBI" id="CHEBI:30616"/>
    </ligand>
</feature>
<comment type="function">
    <text evidence="1">Produces ATP from ADP in the presence of a proton gradient across the membrane. The catalytic sites are hosted primarily by the beta subunits.</text>
</comment>
<comment type="catalytic activity">
    <reaction evidence="1">
        <text>ATP + H2O + 4 H(+)(in) = ADP + phosphate + 5 H(+)(out)</text>
        <dbReference type="Rhea" id="RHEA:57720"/>
        <dbReference type="ChEBI" id="CHEBI:15377"/>
        <dbReference type="ChEBI" id="CHEBI:15378"/>
        <dbReference type="ChEBI" id="CHEBI:30616"/>
        <dbReference type="ChEBI" id="CHEBI:43474"/>
        <dbReference type="ChEBI" id="CHEBI:456216"/>
        <dbReference type="EC" id="7.1.2.2"/>
    </reaction>
</comment>
<comment type="subunit">
    <text evidence="1">F-type ATPases have 2 components, CF(1) - the catalytic core - and CF(0) - the membrane proton channel. CF(1) has five subunits: alpha(3), beta(3), gamma(1), delta(1), epsilon(1). CF(0) has three main subunits: a(1), b(2) and c(9-12). The alpha and beta chains form an alternating ring which encloses part of the gamma chain. CF(1) is attached to CF(0) by a central stalk formed by the gamma and epsilon chains, while a peripheral stalk is formed by the delta and b chains.</text>
</comment>
<comment type="subcellular location">
    <subcellularLocation>
        <location evidence="1">Cell inner membrane</location>
        <topology evidence="1">Peripheral membrane protein</topology>
    </subcellularLocation>
</comment>
<comment type="similarity">
    <text evidence="1">Belongs to the ATPase alpha/beta chains family.</text>
</comment>